<comment type="function">
    <text evidence="1">Component of the NOP7 complex, which is required for maturation of the 25S and 5.8S ribosomal RNAs and formation of the 60S ribosome.</text>
</comment>
<comment type="subunit">
    <text evidence="1">Component of the NOP7 complex, composed of erb1, nop7 and ytm1. The complex is held together by erb1, which interacts with nop7 via its N-terminal domain and with ytm1 via a high-affinity interaction between the seven-bladed beta-propeller domains of the 2 proteins. The NOP7 complex associates with the 66S pre-ribosome.</text>
</comment>
<comment type="subcellular location">
    <subcellularLocation>
        <location evidence="1">Nucleus</location>
        <location evidence="1">Nucleolus</location>
    </subcellularLocation>
    <subcellularLocation>
        <location evidence="1">Nucleus</location>
        <location evidence="1">Nucleoplasm</location>
    </subcellularLocation>
</comment>
<comment type="similarity">
    <text evidence="1">Belongs to the pescadillo family.</text>
</comment>
<accession>A1CXF4</accession>
<keyword id="KW-0175">Coiled coil</keyword>
<keyword id="KW-0539">Nucleus</keyword>
<keyword id="KW-1185">Reference proteome</keyword>
<keyword id="KW-0690">Ribosome biogenesis</keyword>
<keyword id="KW-0698">rRNA processing</keyword>
<feature type="chain" id="PRO_0000370497" description="Pescadillo homolog">
    <location>
        <begin position="1"/>
        <end position="675"/>
    </location>
</feature>
<feature type="domain" description="BRCT" evidence="1">
    <location>
        <begin position="351"/>
        <end position="470"/>
    </location>
</feature>
<feature type="region of interest" description="Disordered" evidence="2">
    <location>
        <begin position="308"/>
        <end position="330"/>
    </location>
</feature>
<feature type="region of interest" description="Disordered" evidence="2">
    <location>
        <begin position="474"/>
        <end position="675"/>
    </location>
</feature>
<feature type="coiled-coil region" evidence="1">
    <location>
        <begin position="567"/>
        <end position="675"/>
    </location>
</feature>
<feature type="compositionally biased region" description="Basic and acidic residues" evidence="2">
    <location>
        <begin position="308"/>
        <end position="317"/>
    </location>
</feature>
<feature type="compositionally biased region" description="Acidic residues" evidence="2">
    <location>
        <begin position="497"/>
        <end position="517"/>
    </location>
</feature>
<feature type="compositionally biased region" description="Basic and acidic residues" evidence="2">
    <location>
        <begin position="518"/>
        <end position="529"/>
    </location>
</feature>
<feature type="compositionally biased region" description="Acidic residues" evidence="2">
    <location>
        <begin position="531"/>
        <end position="540"/>
    </location>
</feature>
<feature type="compositionally biased region" description="Acidic residues" evidence="2">
    <location>
        <begin position="548"/>
        <end position="580"/>
    </location>
</feature>
<feature type="compositionally biased region" description="Basic and acidic residues" evidence="2">
    <location>
        <begin position="581"/>
        <end position="591"/>
    </location>
</feature>
<feature type="compositionally biased region" description="Basic residues" evidence="2">
    <location>
        <begin position="612"/>
        <end position="623"/>
    </location>
</feature>
<feature type="compositionally biased region" description="Basic and acidic residues" evidence="2">
    <location>
        <begin position="624"/>
        <end position="634"/>
    </location>
</feature>
<protein>
    <recommendedName>
        <fullName evidence="1">Pescadillo homolog</fullName>
    </recommendedName>
    <alternativeName>
        <fullName evidence="1">Nucleolar protein 7 homolog</fullName>
    </alternativeName>
</protein>
<evidence type="ECO:0000255" key="1">
    <source>
        <dbReference type="HAMAP-Rule" id="MF_03028"/>
    </source>
</evidence>
<evidence type="ECO:0000256" key="2">
    <source>
        <dbReference type="SAM" id="MobiDB-lite"/>
    </source>
</evidence>
<dbReference type="EMBL" id="DS027685">
    <property type="protein sequence ID" value="EAW25306.1"/>
    <property type="molecule type" value="Genomic_DNA"/>
</dbReference>
<dbReference type="RefSeq" id="XP_001267203.1">
    <property type="nucleotide sequence ID" value="XM_001267202.1"/>
</dbReference>
<dbReference type="SMR" id="A1CXF4"/>
<dbReference type="STRING" id="331117.A1CXF4"/>
<dbReference type="EnsemblFungi" id="EAW25306">
    <property type="protein sequence ID" value="EAW25306"/>
    <property type="gene ID" value="NFIA_107990"/>
</dbReference>
<dbReference type="GeneID" id="4593513"/>
<dbReference type="KEGG" id="nfi:NFIA_107990"/>
<dbReference type="VEuPathDB" id="FungiDB:NFIA_107990"/>
<dbReference type="eggNOG" id="KOG2481">
    <property type="taxonomic scope" value="Eukaryota"/>
</dbReference>
<dbReference type="HOGENOM" id="CLU_019619_1_1_1"/>
<dbReference type="OMA" id="QKVTWIV"/>
<dbReference type="OrthoDB" id="10264910at2759"/>
<dbReference type="Proteomes" id="UP000006702">
    <property type="component" value="Unassembled WGS sequence"/>
</dbReference>
<dbReference type="GO" id="GO:0005654">
    <property type="term" value="C:nucleoplasm"/>
    <property type="evidence" value="ECO:0007669"/>
    <property type="project" value="UniProtKB-SubCell"/>
</dbReference>
<dbReference type="GO" id="GO:0070545">
    <property type="term" value="C:PeBoW complex"/>
    <property type="evidence" value="ECO:0007669"/>
    <property type="project" value="TreeGrafter"/>
</dbReference>
<dbReference type="GO" id="GO:0030687">
    <property type="term" value="C:preribosome, large subunit precursor"/>
    <property type="evidence" value="ECO:0007669"/>
    <property type="project" value="UniProtKB-UniRule"/>
</dbReference>
<dbReference type="GO" id="GO:0043021">
    <property type="term" value="F:ribonucleoprotein complex binding"/>
    <property type="evidence" value="ECO:0007669"/>
    <property type="project" value="UniProtKB-UniRule"/>
</dbReference>
<dbReference type="GO" id="GO:0003723">
    <property type="term" value="F:RNA binding"/>
    <property type="evidence" value="ECO:0007669"/>
    <property type="project" value="TreeGrafter"/>
</dbReference>
<dbReference type="GO" id="GO:0000466">
    <property type="term" value="P:maturation of 5.8S rRNA from tricistronic rRNA transcript (SSU-rRNA, 5.8S rRNA, LSU-rRNA)"/>
    <property type="evidence" value="ECO:0007669"/>
    <property type="project" value="UniProtKB-UniRule"/>
</dbReference>
<dbReference type="GO" id="GO:0000463">
    <property type="term" value="P:maturation of LSU-rRNA from tricistronic rRNA transcript (SSU-rRNA, 5.8S rRNA, LSU-rRNA)"/>
    <property type="evidence" value="ECO:0007669"/>
    <property type="project" value="UniProtKB-UniRule"/>
</dbReference>
<dbReference type="CDD" id="cd17709">
    <property type="entry name" value="BRCT_pescadillo_like"/>
    <property type="match status" value="1"/>
</dbReference>
<dbReference type="FunFam" id="3.40.50.10190:FF:000056">
    <property type="entry name" value="Pescadillo homolog"/>
    <property type="match status" value="1"/>
</dbReference>
<dbReference type="Gene3D" id="3.40.50.10190">
    <property type="entry name" value="BRCT domain"/>
    <property type="match status" value="1"/>
</dbReference>
<dbReference type="HAMAP" id="MF_03028">
    <property type="entry name" value="Pescadillo"/>
    <property type="match status" value="1"/>
</dbReference>
<dbReference type="InterPro" id="IPR001357">
    <property type="entry name" value="BRCT_dom"/>
</dbReference>
<dbReference type="InterPro" id="IPR036420">
    <property type="entry name" value="BRCT_dom_sf"/>
</dbReference>
<dbReference type="InterPro" id="IPR010613">
    <property type="entry name" value="PES"/>
</dbReference>
<dbReference type="PANTHER" id="PTHR12221">
    <property type="entry name" value="PESCADILLO - RELATED"/>
    <property type="match status" value="1"/>
</dbReference>
<dbReference type="PANTHER" id="PTHR12221:SF6">
    <property type="entry name" value="PESCADILLO HOMOLOG"/>
    <property type="match status" value="1"/>
</dbReference>
<dbReference type="Pfam" id="PF06732">
    <property type="entry name" value="Pescadillo_N"/>
    <property type="match status" value="1"/>
</dbReference>
<dbReference type="SUPFAM" id="SSF52113">
    <property type="entry name" value="BRCT domain"/>
    <property type="match status" value="1"/>
</dbReference>
<dbReference type="PROSITE" id="PS50172">
    <property type="entry name" value="BRCT"/>
    <property type="match status" value="1"/>
</dbReference>
<reference key="1">
    <citation type="journal article" date="2008" name="PLoS Genet.">
        <title>Genomic islands in the pathogenic filamentous fungus Aspergillus fumigatus.</title>
        <authorList>
            <person name="Fedorova N.D."/>
            <person name="Khaldi N."/>
            <person name="Joardar V.S."/>
            <person name="Maiti R."/>
            <person name="Amedeo P."/>
            <person name="Anderson M.J."/>
            <person name="Crabtree J."/>
            <person name="Silva J.C."/>
            <person name="Badger J.H."/>
            <person name="Albarraq A."/>
            <person name="Angiuoli S."/>
            <person name="Bussey H."/>
            <person name="Bowyer P."/>
            <person name="Cotty P.J."/>
            <person name="Dyer P.S."/>
            <person name="Egan A."/>
            <person name="Galens K."/>
            <person name="Fraser-Liggett C.M."/>
            <person name="Haas B.J."/>
            <person name="Inman J.M."/>
            <person name="Kent R."/>
            <person name="Lemieux S."/>
            <person name="Malavazi I."/>
            <person name="Orvis J."/>
            <person name="Roemer T."/>
            <person name="Ronning C.M."/>
            <person name="Sundaram J.P."/>
            <person name="Sutton G."/>
            <person name="Turner G."/>
            <person name="Venter J.C."/>
            <person name="White O.R."/>
            <person name="Whitty B.R."/>
            <person name="Youngman P."/>
            <person name="Wolfe K.H."/>
            <person name="Goldman G.H."/>
            <person name="Wortman J.R."/>
            <person name="Jiang B."/>
            <person name="Denning D.W."/>
            <person name="Nierman W.C."/>
        </authorList>
    </citation>
    <scope>NUCLEOTIDE SEQUENCE [LARGE SCALE GENOMIC DNA]</scope>
    <source>
        <strain>ATCC 1020 / DSM 3700 / CBS 544.65 / FGSC A1164 / JCM 1740 / NRRL 181 / WB 181</strain>
    </source>
</reference>
<sequence length="675" mass="75502">MGKIKKKGTSGQAKNYITRTQAVRKLQISLPDFRRLCIFKGIYPREPRNKKKASKTSTPNTTFYYTKDIQYLLHEPLLRKFREQKAVAKKIARSLGRGEVGDAARLEKNHAPKLTLDHVIKERYPTFIDALRDLDDALSLLFLFANLPSTAHVPPKTIALCQRLCHEFQHYLITTNSLRKSFLSIKGIYYQATIQGQDIMWLVPYRFVQRVNGDVDYRIMATFVDFYTTLLGFVNFRLYSSIGLRYPPKFDTRSDENGAELAAFTLEGRGVGDAPKAIEAGNTQATTSTNKEVSKEIQAKVDDVIKSAGLDEAKEEPAAETTEESSETIDKFEPAAPEADTLPQPDLSGSEAGSLFAPFTFYISREAPRAPLEFILRAFGCKRIGWDAVLGDGAFTHDETDTRITHQIVDRPQLPESSLPAIPAASKDGSDAVQKVKPGTRIPGRTYVQPQWVWDCINEGKLVRPDLYAPGATLPPHLSPWVKPSRGGYDPKASLAEQEEEGEAELDEDSDEEMEEAANDKKAEAKADVGSESEDEDESVDGGMDVAGTDDDESESEEEEEDFGGFEEEEAASESEDEEEAARTQHQKELEAEAAGLPFSSNGATSDESKKKASQAKKIAAKKRKEEEELERQKMMMSRKKRKLLEKMIYSNKKQSEEAAKLRSKRRKLEKEATK</sequence>
<gene>
    <name type="primary">nop7</name>
    <name type="ORF">NFIA_107990</name>
</gene>
<organism>
    <name type="scientific">Neosartorya fischeri (strain ATCC 1020 / DSM 3700 / CBS 544.65 / FGSC A1164 / JCM 1740 / NRRL 181 / WB 181)</name>
    <name type="common">Aspergillus fischerianus</name>
    <dbReference type="NCBI Taxonomy" id="331117"/>
    <lineage>
        <taxon>Eukaryota</taxon>
        <taxon>Fungi</taxon>
        <taxon>Dikarya</taxon>
        <taxon>Ascomycota</taxon>
        <taxon>Pezizomycotina</taxon>
        <taxon>Eurotiomycetes</taxon>
        <taxon>Eurotiomycetidae</taxon>
        <taxon>Eurotiales</taxon>
        <taxon>Aspergillaceae</taxon>
        <taxon>Aspergillus</taxon>
        <taxon>Aspergillus subgen. Fumigati</taxon>
    </lineage>
</organism>
<name>PESC_NEOFI</name>
<proteinExistence type="inferred from homology"/>